<name>C7A17_VITVI</name>
<proteinExistence type="evidence at protein level"/>
<feature type="chain" id="PRO_0000444128" description="Beta-amyrin 28-monooxygenase">
    <location>
        <begin position="1"/>
        <end position="480"/>
    </location>
</feature>
<feature type="transmembrane region" description="Helical" evidence="2">
    <location>
        <begin position="3"/>
        <end position="23"/>
    </location>
</feature>
<feature type="binding site" description="axial binding residue" evidence="1">
    <location>
        <position position="427"/>
    </location>
    <ligand>
        <name>heme</name>
        <dbReference type="ChEBI" id="CHEBI:30413"/>
    </ligand>
    <ligandPart>
        <name>Fe</name>
        <dbReference type="ChEBI" id="CHEBI:18248"/>
    </ligandPart>
</feature>
<feature type="sequence conflict" description="In Ref. 1; BAJ84107." evidence="5" ref="1">
    <original>C</original>
    <variation>S</variation>
    <location>
        <position position="12"/>
    </location>
</feature>
<protein>
    <recommendedName>
        <fullName evidence="5">Beta-amyrin 28-monooxygenase</fullName>
        <ecNumber evidence="3">1.14.14.126</ecNumber>
    </recommendedName>
    <alternativeName>
        <fullName evidence="5">Beta-amyrin 28-oxidase</fullName>
    </alternativeName>
    <alternativeName>
        <fullName evidence="4">Cytochrome P450 716A17</fullName>
        <shortName evidence="4">VvCYP716A17</shortName>
    </alternativeName>
</protein>
<organism>
    <name type="scientific">Vitis vinifera</name>
    <name type="common">Grape</name>
    <dbReference type="NCBI Taxonomy" id="29760"/>
    <lineage>
        <taxon>Eukaryota</taxon>
        <taxon>Viridiplantae</taxon>
        <taxon>Streptophyta</taxon>
        <taxon>Embryophyta</taxon>
        <taxon>Tracheophyta</taxon>
        <taxon>Spermatophyta</taxon>
        <taxon>Magnoliopsida</taxon>
        <taxon>eudicotyledons</taxon>
        <taxon>Gunneridae</taxon>
        <taxon>Pentapetalae</taxon>
        <taxon>rosids</taxon>
        <taxon>Vitales</taxon>
        <taxon>Vitaceae</taxon>
        <taxon>Viteae</taxon>
        <taxon>Vitis</taxon>
    </lineage>
</organism>
<reference key="1">
    <citation type="journal article" date="2011" name="Plant Cell Physiol.">
        <title>CYP716A subfamily members are multifunctional oxidases in triterpenoid biosynthesis.</title>
        <authorList>
            <person name="Fukushima E.O."/>
            <person name="Seki H."/>
            <person name="Ohyama K."/>
            <person name="Ono E."/>
            <person name="Umemoto N."/>
            <person name="Mizutani M."/>
            <person name="Saito K."/>
            <person name="Muranaka T."/>
        </authorList>
    </citation>
    <scope>NUCLEOTIDE SEQUENCE [MRNA]</scope>
    <scope>FUNCTION</scope>
    <scope>CATALYTIC ACTIVITY</scope>
    <scope>TISSUE SPECIFICITY</scope>
    <source>
        <strain>cv. Pinot noir</strain>
    </source>
</reference>
<reference key="2">
    <citation type="journal article" date="2007" name="PLoS ONE">
        <title>A high quality draft consensus sequence of the genome of a heterozygous grapevine variety.</title>
        <authorList>
            <person name="Velasco R."/>
            <person name="Zharkikh A."/>
            <person name="Troggio M."/>
            <person name="Cartwright D.A."/>
            <person name="Cestaro A."/>
            <person name="Pruss D."/>
            <person name="Pindo M."/>
            <person name="FitzGerald L.M."/>
            <person name="Vezzulli S."/>
            <person name="Reid J."/>
            <person name="Malacarne G."/>
            <person name="Iliev D."/>
            <person name="Coppola G."/>
            <person name="Wardell B."/>
            <person name="Micheletti D."/>
            <person name="Macalma T."/>
            <person name="Facci M."/>
            <person name="Mitchell J.T."/>
            <person name="Perazzolli M."/>
            <person name="Eldredge G."/>
            <person name="Gatto P."/>
            <person name="Oyzerski R."/>
            <person name="Moretto M."/>
            <person name="Gutin N."/>
            <person name="Stefanini M."/>
            <person name="Chen Y."/>
            <person name="Segala C."/>
            <person name="Davenport C."/>
            <person name="Dematte L."/>
            <person name="Mraz A."/>
            <person name="Battilana J."/>
            <person name="Stormo K."/>
            <person name="Costa F."/>
            <person name="Tao Q."/>
            <person name="Si-Ammour A."/>
            <person name="Harkins T."/>
            <person name="Lackey A."/>
            <person name="Perbost C."/>
            <person name="Taillon B."/>
            <person name="Stella A."/>
            <person name="Solovyev V."/>
            <person name="Fawcett J.A."/>
            <person name="Sterck L."/>
            <person name="Vandepoele K."/>
            <person name="Grando S.M."/>
            <person name="Toppo S."/>
            <person name="Moser C."/>
            <person name="Lanchbury J."/>
            <person name="Bogden R."/>
            <person name="Skolnick M."/>
            <person name="Sgaramella V."/>
            <person name="Bhatnagar S.K."/>
            <person name="Fontana P."/>
            <person name="Gutin A."/>
            <person name="Van de Peer Y."/>
            <person name="Salamini F."/>
            <person name="Viola R."/>
        </authorList>
    </citation>
    <scope>NUCLEOTIDE SEQUENCE [LARGE SCALE GENOMIC DNA]</scope>
    <source>
        <strain>cv. Pinot noir</strain>
    </source>
</reference>
<evidence type="ECO:0000250" key="1">
    <source>
        <dbReference type="UniProtKB" id="Q96242"/>
    </source>
</evidence>
<evidence type="ECO:0000255" key="2"/>
<evidence type="ECO:0000269" key="3">
    <source>
    </source>
</evidence>
<evidence type="ECO:0000303" key="4">
    <source>
    </source>
</evidence>
<evidence type="ECO:0000305" key="5"/>
<evidence type="ECO:0000312" key="6">
    <source>
        <dbReference type="EMBL" id="CAN72302.1"/>
    </source>
</evidence>
<sequence length="480" mass="54637">MEVFFLSLLLICVLSVSIRLYLLLYKHRSHFTGPNLPPGKIGWPMVGESLEFLSTGWKGHPEKFIFDRISKYSSEVFKTSLLGEPAAVFAGAAGNKFLFSNENKLVHAWWPSSVDKVFPSSTQTSSKEEAKKMRKLLPQFLKPEALQRYTGIMDHIAQRHFADSWDNRDEVIVFPLAKRFTFWLACRLFMSIEDPAHVAKFEKPFHVLASGLITIPIDLPGTPFHRAIKASNFIRKELRAIIKQRKIDLAESKASKTQDILSHMLLATDEDGCHMNEMSIADKILGLLIGGHDTASSAITFLVKYMAELPHIYEKVYKEQMEIANSKAPGELLNWDDVQKMRYSWNVACEVMRLAPPLQGAFREAITDFVFNGFSIPKGWKLYWSANSTHKSLECFPQPEKFDPTRFEGAGPAPYTFVPFGGGPRMCPGKEYARLEILIFMHNLVKRFKWDKLLPDEKIIVDPMPMPAKGLPVRLHPHKP</sequence>
<gene>
    <name evidence="4" type="primary">CYP716A17</name>
    <name evidence="6" type="ORF">VITISV_041935</name>
</gene>
<dbReference type="EC" id="1.14.14.126" evidence="3"/>
<dbReference type="EMBL" id="AB619803">
    <property type="protein sequence ID" value="BAJ84107.1"/>
    <property type="molecule type" value="mRNA"/>
</dbReference>
<dbReference type="EMBL" id="AM457725">
    <property type="protein sequence ID" value="CAN72302.1"/>
    <property type="molecule type" value="Genomic_DNA"/>
</dbReference>
<dbReference type="RefSeq" id="NP_001268076.1">
    <property type="nucleotide sequence ID" value="NM_001281147.1"/>
</dbReference>
<dbReference type="SMR" id="A5BFI4"/>
<dbReference type="PaxDb" id="29760-VIT_11s0065g00040.t01"/>
<dbReference type="GeneID" id="100246675"/>
<dbReference type="KEGG" id="vvi:100246675"/>
<dbReference type="OrthoDB" id="916884at71240"/>
<dbReference type="BRENDA" id="1.14.14.126">
    <property type="organism ID" value="6671"/>
</dbReference>
<dbReference type="ExpressionAtlas" id="A5BFI4">
    <property type="expression patterns" value="baseline"/>
</dbReference>
<dbReference type="GO" id="GO:0016020">
    <property type="term" value="C:membrane"/>
    <property type="evidence" value="ECO:0007669"/>
    <property type="project" value="UniProtKB-SubCell"/>
</dbReference>
<dbReference type="GO" id="GO:0102373">
    <property type="term" value="F:beta-amyrin 28-monooxygenase activity"/>
    <property type="evidence" value="ECO:0007669"/>
    <property type="project" value="UniProtKB-EC"/>
</dbReference>
<dbReference type="GO" id="GO:0020037">
    <property type="term" value="F:heme binding"/>
    <property type="evidence" value="ECO:0007669"/>
    <property type="project" value="InterPro"/>
</dbReference>
<dbReference type="GO" id="GO:0005506">
    <property type="term" value="F:iron ion binding"/>
    <property type="evidence" value="ECO:0007669"/>
    <property type="project" value="InterPro"/>
</dbReference>
<dbReference type="GO" id="GO:0016709">
    <property type="term" value="F:oxidoreductase activity, acting on paired donors, with incorporation or reduction of molecular oxygen, NAD(P)H as one donor, and incorporation of one atom of oxygen"/>
    <property type="evidence" value="ECO:0000314"/>
    <property type="project" value="UniProtKB"/>
</dbReference>
<dbReference type="GO" id="GO:0016135">
    <property type="term" value="P:saponin biosynthetic process"/>
    <property type="evidence" value="ECO:0000314"/>
    <property type="project" value="UniProtKB"/>
</dbReference>
<dbReference type="CDD" id="cd11043">
    <property type="entry name" value="CYP90-like"/>
    <property type="match status" value="1"/>
</dbReference>
<dbReference type="FunFam" id="1.10.630.10:FF:000022">
    <property type="entry name" value="Taxadiene 5-alpha hydroxylase"/>
    <property type="match status" value="1"/>
</dbReference>
<dbReference type="Gene3D" id="1.10.630.10">
    <property type="entry name" value="Cytochrome P450"/>
    <property type="match status" value="1"/>
</dbReference>
<dbReference type="InterPro" id="IPR001128">
    <property type="entry name" value="Cyt_P450"/>
</dbReference>
<dbReference type="InterPro" id="IPR017972">
    <property type="entry name" value="Cyt_P450_CS"/>
</dbReference>
<dbReference type="InterPro" id="IPR002401">
    <property type="entry name" value="Cyt_P450_E_grp-I"/>
</dbReference>
<dbReference type="InterPro" id="IPR036396">
    <property type="entry name" value="Cyt_P450_sf"/>
</dbReference>
<dbReference type="PANTHER" id="PTHR24286">
    <property type="entry name" value="CYTOCHROME P450 26"/>
    <property type="match status" value="1"/>
</dbReference>
<dbReference type="PANTHER" id="PTHR24286:SF349">
    <property type="entry name" value="CYTOCHROME P450 716A1-RELATED"/>
    <property type="match status" value="1"/>
</dbReference>
<dbReference type="Pfam" id="PF00067">
    <property type="entry name" value="p450"/>
    <property type="match status" value="1"/>
</dbReference>
<dbReference type="PRINTS" id="PR00463">
    <property type="entry name" value="EP450I"/>
</dbReference>
<dbReference type="PRINTS" id="PR00385">
    <property type="entry name" value="P450"/>
</dbReference>
<dbReference type="SUPFAM" id="SSF48264">
    <property type="entry name" value="Cytochrome P450"/>
    <property type="match status" value="1"/>
</dbReference>
<dbReference type="PROSITE" id="PS00086">
    <property type="entry name" value="CYTOCHROME_P450"/>
    <property type="match status" value="1"/>
</dbReference>
<comment type="function">
    <text evidence="3">Catalyzes the carboxylation of beta-amyrin at the C-28 position to form oleanolic acid. May be involved in saponin biosynthesis in fruit skin.</text>
</comment>
<comment type="catalytic activity">
    <reaction evidence="3">
        <text>beta-amyrin + 3 reduced [NADPH--hemoprotein reductase] + 3 O2 = oleanolate + 3 oxidized [NADPH--hemoprotein reductase] + 4 H2O + 4 H(+)</text>
        <dbReference type="Rhea" id="RHEA:43068"/>
        <dbReference type="Rhea" id="RHEA-COMP:11964"/>
        <dbReference type="Rhea" id="RHEA-COMP:11965"/>
        <dbReference type="ChEBI" id="CHEBI:10352"/>
        <dbReference type="ChEBI" id="CHEBI:15377"/>
        <dbReference type="ChEBI" id="CHEBI:15378"/>
        <dbReference type="ChEBI" id="CHEBI:15379"/>
        <dbReference type="ChEBI" id="CHEBI:57618"/>
        <dbReference type="ChEBI" id="CHEBI:58210"/>
        <dbReference type="ChEBI" id="CHEBI:82828"/>
        <dbReference type="EC" id="1.14.14.126"/>
    </reaction>
</comment>
<comment type="cofactor">
    <cofactor evidence="1">
        <name>heme</name>
        <dbReference type="ChEBI" id="CHEBI:30413"/>
    </cofactor>
</comment>
<comment type="subcellular location">
    <subcellularLocation>
        <location evidence="2">Membrane</location>
        <topology evidence="2">Single-pass membrane protein</topology>
    </subcellularLocation>
</comment>
<comment type="tissue specificity">
    <text evidence="3">Expressed in leaves, stems and fruit skin.</text>
</comment>
<comment type="similarity">
    <text evidence="5">Belongs to the cytochrome P450 family.</text>
</comment>
<accession>A5BFI4</accession>
<accession>F1T283</accession>
<keyword id="KW-0349">Heme</keyword>
<keyword id="KW-0408">Iron</keyword>
<keyword id="KW-0472">Membrane</keyword>
<keyword id="KW-0479">Metal-binding</keyword>
<keyword id="KW-0503">Monooxygenase</keyword>
<keyword id="KW-0560">Oxidoreductase</keyword>
<keyword id="KW-0812">Transmembrane</keyword>
<keyword id="KW-1133">Transmembrane helix</keyword>